<gene>
    <name type="primary">has3</name>
</gene>
<sequence length="557" mass="64061">MPGKFQTGLRVLATCLFALLVLGGILVAYVTGYQFIHTDRHHLSFGLYGAILGLHLLSQSLFAFLEHRKMRGGGRCPSGKSTVVLCIAAYQEDPEYLRKCLRSVRRLSYPHLRVIMVVDGNTEEDRYMMDIFREVMGSEGTCCYIWDKNYHESEEGGQEGERGVQEMVKNFQYVCIMQKWGGKREVTYTAFRALGDSVAYVQVCDSDTVLDPACTAEMLRILEEDPEVGGVGGDVQILNKYESWISFLSSFRYWMAFNVERACQSYFGCVQCISGPLGMYRNSLLQYFLEDWYHQTFLGQKCSFGDDRHLTNRVLSMGFRTKYTARSRCLTETPTRYLRWLNQQTRWSKSYFREWLYNALWFHKHHLWMTYESVVTGFFPFFLVATVVQLFYRGRVWNILLFLLTVQLVGILKATYACILRGNAEMIFMSLYSLLYMTSLLPAKIFAVITIKKSGWGTSGRRKLVVNFMGMVPVSVWFCILLGGLVYTAYCQSHDPFTETELLFLLTGAILYGCYWVALLSLYLALIARRCGKRQELYNLALEEVSEPEPAAKAIKP</sequence>
<proteinExistence type="evidence at transcript level"/>
<protein>
    <recommendedName>
        <fullName>Hyaluronan synthase 3</fullName>
        <ecNumber evidence="2">2.4.1.212</ecNumber>
    </recommendedName>
    <alternativeName>
        <fullName>Hyaluronate synthase 3</fullName>
    </alternativeName>
    <alternativeName>
        <fullName>Hyaluronic acid synthase 3</fullName>
        <shortName>HA synthase 3</shortName>
        <shortName>xHAS3</shortName>
    </alternativeName>
</protein>
<dbReference type="EC" id="2.4.1.212" evidence="2"/>
<dbReference type="EMBL" id="AF015778">
    <property type="protein sequence ID" value="AAB94539.1"/>
    <property type="molecule type" value="Genomic_DNA"/>
</dbReference>
<dbReference type="EMBL" id="AY302252">
    <property type="protein sequence ID" value="AAP58398.1"/>
    <property type="molecule type" value="mRNA"/>
</dbReference>
<dbReference type="RefSeq" id="NP_001083642.1">
    <property type="nucleotide sequence ID" value="NM_001090173.1"/>
</dbReference>
<dbReference type="SMR" id="O57426"/>
<dbReference type="CAZy" id="GT2">
    <property type="family name" value="Glycosyltransferase Family 2"/>
</dbReference>
<dbReference type="AGR" id="Xenbase:XB-GENE-987831"/>
<dbReference type="Xenbase" id="XB-GENE-987831">
    <property type="gene designation" value="has3.S"/>
</dbReference>
<dbReference type="UniPathway" id="UPA00341"/>
<dbReference type="Proteomes" id="UP000186698">
    <property type="component" value="Unplaced"/>
</dbReference>
<dbReference type="Bgee" id="399037">
    <property type="expression patterns" value="Expressed in egg cell and 9 other cell types or tissues"/>
</dbReference>
<dbReference type="GO" id="GO:0031410">
    <property type="term" value="C:cytoplasmic vesicle"/>
    <property type="evidence" value="ECO:0007669"/>
    <property type="project" value="UniProtKB-KW"/>
</dbReference>
<dbReference type="GO" id="GO:0000139">
    <property type="term" value="C:Golgi membrane"/>
    <property type="evidence" value="ECO:0007669"/>
    <property type="project" value="UniProtKB-SubCell"/>
</dbReference>
<dbReference type="GO" id="GO:0005886">
    <property type="term" value="C:plasma membrane"/>
    <property type="evidence" value="ECO:0000318"/>
    <property type="project" value="GO_Central"/>
</dbReference>
<dbReference type="GO" id="GO:0050501">
    <property type="term" value="F:hyaluronan synthase activity"/>
    <property type="evidence" value="ECO:0000250"/>
    <property type="project" value="UniProtKB"/>
</dbReference>
<dbReference type="GO" id="GO:0085029">
    <property type="term" value="P:extracellular matrix assembly"/>
    <property type="evidence" value="ECO:0000250"/>
    <property type="project" value="UniProtKB"/>
</dbReference>
<dbReference type="GO" id="GO:0030213">
    <property type="term" value="P:hyaluronan biosynthetic process"/>
    <property type="evidence" value="ECO:0000318"/>
    <property type="project" value="GO_Central"/>
</dbReference>
<dbReference type="GO" id="GO:0000271">
    <property type="term" value="P:polysaccharide biosynthetic process"/>
    <property type="evidence" value="ECO:0000250"/>
    <property type="project" value="UniProtKB"/>
</dbReference>
<dbReference type="CDD" id="cd06434">
    <property type="entry name" value="GT2_HAS"/>
    <property type="match status" value="1"/>
</dbReference>
<dbReference type="Gene3D" id="3.90.550.10">
    <property type="entry name" value="Spore Coat Polysaccharide Biosynthesis Protein SpsA, Chain A"/>
    <property type="match status" value="1"/>
</dbReference>
<dbReference type="InterPro" id="IPR029044">
    <property type="entry name" value="Nucleotide-diphossugar_trans"/>
</dbReference>
<dbReference type="PANTHER" id="PTHR22913">
    <property type="entry name" value="HYALURONAN SYNTHASE"/>
    <property type="match status" value="1"/>
</dbReference>
<dbReference type="PANTHER" id="PTHR22913:SF6">
    <property type="entry name" value="HYALURONAN SYNTHASE 3"/>
    <property type="match status" value="1"/>
</dbReference>
<dbReference type="Pfam" id="PF13641">
    <property type="entry name" value="Glyco_tranf_2_3"/>
    <property type="match status" value="1"/>
</dbReference>
<dbReference type="SUPFAM" id="SSF53448">
    <property type="entry name" value="Nucleotide-diphospho-sugar transferases"/>
    <property type="match status" value="1"/>
</dbReference>
<evidence type="ECO:0000250" key="1">
    <source>
        <dbReference type="UniProtKB" id="O00219"/>
    </source>
</evidence>
<evidence type="ECO:0000250" key="2">
    <source>
        <dbReference type="UniProtKB" id="O08650"/>
    </source>
</evidence>
<evidence type="ECO:0000255" key="3"/>
<evidence type="ECO:0000305" key="4"/>
<name>HYAS3_XENLA</name>
<feature type="chain" id="PRO_0000197181" description="Hyaluronan synthase 3">
    <location>
        <begin position="1"/>
        <end position="557"/>
    </location>
</feature>
<feature type="topological domain" description="Cytoplasmic" evidence="4">
    <location>
        <begin position="1"/>
        <end position="10"/>
    </location>
</feature>
<feature type="transmembrane region" description="Helical; Name=1" evidence="3">
    <location>
        <begin position="11"/>
        <end position="31"/>
    </location>
</feature>
<feature type="topological domain" description="Extracellular" evidence="4">
    <location>
        <begin position="32"/>
        <end position="44"/>
    </location>
</feature>
<feature type="transmembrane region" description="Helical; Name=2" evidence="3">
    <location>
        <begin position="45"/>
        <end position="65"/>
    </location>
</feature>
<feature type="topological domain" description="Cytoplasmic" evidence="4">
    <location>
        <begin position="66"/>
        <end position="367"/>
    </location>
</feature>
<feature type="transmembrane region" description="Helical; Name=3" evidence="3">
    <location>
        <begin position="368"/>
        <end position="388"/>
    </location>
</feature>
<feature type="topological domain" description="Extracellular" evidence="4">
    <location>
        <begin position="389"/>
        <end position="398"/>
    </location>
</feature>
<feature type="transmembrane region" description="Helical; Name=4" evidence="3">
    <location>
        <begin position="399"/>
        <end position="419"/>
    </location>
</feature>
<feature type="topological domain" description="Cytoplasmic" evidence="4">
    <location>
        <begin position="420"/>
        <end position="430"/>
    </location>
</feature>
<feature type="transmembrane region" description="Helical; Name=5" evidence="3">
    <location>
        <begin position="431"/>
        <end position="451"/>
    </location>
</feature>
<feature type="topological domain" description="Extracellular" evidence="4">
    <location>
        <begin position="452"/>
        <end position="463"/>
    </location>
</feature>
<feature type="transmembrane region" description="Helical; Name=6" evidence="3">
    <location>
        <begin position="464"/>
        <end position="484"/>
    </location>
</feature>
<feature type="topological domain" description="Cytoplasmic" evidence="4">
    <location>
        <begin position="485"/>
        <end position="501"/>
    </location>
</feature>
<feature type="transmembrane region" description="Helical; Name=7" evidence="3">
    <location>
        <begin position="502"/>
        <end position="522"/>
    </location>
</feature>
<feature type="topological domain" description="Extracellular" evidence="4">
    <location>
        <begin position="523"/>
        <end position="557"/>
    </location>
</feature>
<feature type="sequence conflict" description="In Ref. 2; AAB94539." evidence="4" ref="2">
    <original>K</original>
    <variation>N</variation>
    <location>
        <position position="452"/>
    </location>
</feature>
<keyword id="KW-1003">Cell membrane</keyword>
<keyword id="KW-0968">Cytoplasmic vesicle</keyword>
<keyword id="KW-0328">Glycosyltransferase</keyword>
<keyword id="KW-0333">Golgi apparatus</keyword>
<keyword id="KW-0472">Membrane</keyword>
<keyword id="KW-1185">Reference proteome</keyword>
<keyword id="KW-0808">Transferase</keyword>
<keyword id="KW-0812">Transmembrane</keyword>
<keyword id="KW-1133">Transmembrane helix</keyword>
<accession>O57426</accession>
<accession>Q6W9J2</accession>
<organism>
    <name type="scientific">Xenopus laevis</name>
    <name type="common">African clawed frog</name>
    <dbReference type="NCBI Taxonomy" id="8355"/>
    <lineage>
        <taxon>Eukaryota</taxon>
        <taxon>Metazoa</taxon>
        <taxon>Chordata</taxon>
        <taxon>Craniata</taxon>
        <taxon>Vertebrata</taxon>
        <taxon>Euteleostomi</taxon>
        <taxon>Amphibia</taxon>
        <taxon>Batrachia</taxon>
        <taxon>Anura</taxon>
        <taxon>Pipoidea</taxon>
        <taxon>Pipidae</taxon>
        <taxon>Xenopodinae</taxon>
        <taxon>Xenopus</taxon>
        <taxon>Xenopus</taxon>
    </lineage>
</organism>
<reference key="1">
    <citation type="journal article" date="2003" name="Matrix Biol.">
        <title>Molecular cloning, genomic organization and developmental expression of the Xenopus laevis hyaluronan synthase 3.</title>
        <authorList>
            <person name="Vigetti D."/>
            <person name="Viola M."/>
            <person name="Gornati R."/>
            <person name="Ori M."/>
            <person name="Nardi I."/>
            <person name="Passi A."/>
            <person name="De Luca G."/>
            <person name="Bernardini G."/>
        </authorList>
    </citation>
    <scope>NUCLEOTIDE SEQUENCE [MRNA]</scope>
</reference>
<reference key="2">
    <citation type="journal article" date="1998" name="J. Biol. Chem.">
        <title>Characterization and molecular evolution of a vertebrate hyaluronan synthase gene family.</title>
        <authorList>
            <person name="Spicer A.P."/>
            <person name="McDonald J.A."/>
        </authorList>
    </citation>
    <scope>NUCLEOTIDE SEQUENCE [GENOMIC DNA] OF 265-454</scope>
</reference>
<comment type="function">
    <text evidence="2">Catalyzes the addition of GlcNAc or GlcUA monosaccharides to the nascent hyaluronan polymer. Therefore, it is essential to hyaluronan synthesis a major component of most extracellular matrices that has a structural role in tissues architectures and regulates cell adhesion, migration and differentiation (By similarity). This is one of three isoenzymes responsible for cellular hyaluronan synthesis.</text>
</comment>
<comment type="catalytic activity">
    <reaction evidence="2">
        <text>[hyaluronan](n) + UDP-N-acetyl-alpha-D-glucosamine = N-acetyl-beta-D-glucosaminyl-(1-&gt;4)-[hyaluronan](n) + UDP + H(+)</text>
        <dbReference type="Rhea" id="RHEA:20465"/>
        <dbReference type="Rhea" id="RHEA-COMP:12583"/>
        <dbReference type="Rhea" id="RHEA-COMP:12585"/>
        <dbReference type="ChEBI" id="CHEBI:15378"/>
        <dbReference type="ChEBI" id="CHEBI:57705"/>
        <dbReference type="ChEBI" id="CHEBI:58223"/>
        <dbReference type="ChEBI" id="CHEBI:132153"/>
        <dbReference type="ChEBI" id="CHEBI:132154"/>
        <dbReference type="EC" id="2.4.1.212"/>
    </reaction>
    <physiologicalReaction direction="left-to-right" evidence="2">
        <dbReference type="Rhea" id="RHEA:20466"/>
    </physiologicalReaction>
</comment>
<comment type="catalytic activity">
    <reaction evidence="2">
        <text>N-acetyl-beta-D-glucosaminyl-(1-&gt;4)-[hyaluronan](n) + UDP-alpha-D-glucuronate = [hyaluronan](n+1) + UDP + H(+)</text>
        <dbReference type="Rhea" id="RHEA:12528"/>
        <dbReference type="Rhea" id="RHEA-COMP:12585"/>
        <dbReference type="Rhea" id="RHEA-COMP:12587"/>
        <dbReference type="ChEBI" id="CHEBI:15378"/>
        <dbReference type="ChEBI" id="CHEBI:58052"/>
        <dbReference type="ChEBI" id="CHEBI:58223"/>
        <dbReference type="ChEBI" id="CHEBI:132153"/>
        <dbReference type="ChEBI" id="CHEBI:132154"/>
        <dbReference type="EC" id="2.4.1.212"/>
    </reaction>
    <physiologicalReaction direction="left-to-right" evidence="2">
        <dbReference type="Rhea" id="RHEA:12529"/>
    </physiologicalReaction>
</comment>
<comment type="cofactor">
    <cofactor>
        <name>Mg(2+)</name>
        <dbReference type="ChEBI" id="CHEBI:18420"/>
    </cofactor>
</comment>
<comment type="pathway">
    <text evidence="2">Glycan biosynthesis; hyaluronan biosynthesis.</text>
</comment>
<comment type="subcellular location">
    <subcellularLocation>
        <location evidence="2">Cell membrane</location>
        <topology evidence="3">Multi-pass membrane protein</topology>
    </subcellularLocation>
    <subcellularLocation>
        <location evidence="2">Golgi apparatus membrane</location>
        <topology evidence="3">Multi-pass membrane protein</topology>
    </subcellularLocation>
    <subcellularLocation>
        <location evidence="2">Golgi apparatus</location>
        <location evidence="2">trans-Golgi network membrane</location>
        <topology>Multi-pass membrane protein</topology>
    </subcellularLocation>
    <subcellularLocation>
        <location evidence="2">Cytoplasmic vesicle</location>
    </subcellularLocation>
    <text evidence="1 2">Travels through endoplasmic reticulum (ER), Golgi, plasma membrane, and endocytic vesicles (By similarity). Actives only when present in plasma membrane (By similarity). O-GlcNAcylation controls its membrane localization (By similarity). A rapid recycling of HAS3 between plasma membrane and endosomes is controlled by the cytosolic levels of UDP-GlcUA and UDP-GlcNAc (By similarity).</text>
</comment>
<comment type="PTM">
    <text evidence="1">O-GlcNAcylation increases the hyaluronan synthase activity, HAS3 stability and its plasma membrane residence. The concentration of UDP-GlcNAc controls the level of O-GlcNAc modification.</text>
</comment>
<comment type="similarity">
    <text evidence="4">Belongs to the NodC/HAS family.</text>
</comment>